<protein>
    <recommendedName>
        <fullName evidence="6">Small ribosomal subunit protein eS21B</fullName>
    </recommendedName>
    <alternativeName>
        <fullName evidence="7">40S ribosomal protein S21-B</fullName>
    </alternativeName>
    <alternativeName>
        <fullName>S26</fullName>
    </alternativeName>
    <alternativeName>
        <fullName>YS25</fullName>
    </alternativeName>
</protein>
<feature type="chain" id="PRO_0000194762" description="Small ribosomal subunit protein eS21B">
    <location>
        <begin position="1"/>
        <end position="87"/>
    </location>
</feature>
<feature type="modified residue" description="N-acetylmethionine" evidence="1">
    <location>
        <position position="1"/>
    </location>
</feature>
<proteinExistence type="evidence at protein level"/>
<comment type="function">
    <text evidence="4 9">Component of the ribosome, a large ribonucleoprotein complex responsible for the synthesis of proteins in the cell. The small ribosomal subunit (SSU) binds messenger RNAs (mRNAs) and translates the encoded message by selecting cognate aminoacyl-transfer RNA (tRNA) molecules. The large subunit (LSU) contains the ribosomal catalytic site termed the peptidyl transferase center (PTC), which catalyzes the formation of peptide bonds, thereby polymerizing the amino acids delivered by tRNAs into a polypeptide chain. The nascent polypeptides leave the ribosome through a tunnel in the LSU and interact with protein factors that function in enzymatic processing, targeting, and the membrane insertion of nascent chains at the exit of the ribosomal tunnel (PubMed:22096102). eS21 is required for the processing of the 20S rRNA-precursor to mature 18S rRNA in a late step of the maturation of 40S ribosomal subunits. Has a physiological role leading to 18S rRNA stability (PubMed:14627813).</text>
</comment>
<comment type="subunit">
    <text evidence="5 10">Component of the small ribosomal subunit (SSU). Mature yeast ribosomes consist of a small (40S) and a large (60S) subunit. The 40S small subunit contains 1 molecule of ribosomal RNA (18S rRNA) and 33 different proteins (encoded by 57 genes). The large 60S subunit contains 3 rRNA molecules (25S, 5.8S and 5S rRNA) and 46 different proteins (encoded by 81 genes) (PubMed:22096102, PubMed:9559554).</text>
</comment>
<comment type="subcellular location">
    <subcellularLocation>
        <location evidence="2 4 5">Cytoplasm</location>
    </subcellularLocation>
</comment>
<comment type="PTM">
    <text evidence="1">N-terminally acetylated by acetyltransferase NatB.</text>
</comment>
<comment type="disruption phenotype">
    <text evidence="4">Reduction in growth rate, a decrease in free 40S subunits, an increase in the amount of free 60S subunits and a decrease in polysome size.</text>
</comment>
<comment type="miscellaneous">
    <text evidence="3">Present with 15300 molecules/cell in log phase SD medium.</text>
</comment>
<comment type="miscellaneous">
    <text evidence="8">There are 2 genes for eS21 in yeast.</text>
</comment>
<comment type="similarity">
    <text evidence="8">Belongs to the eukaryotic ribosomal protein eS21 family.</text>
</comment>
<name>RS21B_YEAST</name>
<keyword id="KW-0007">Acetylation</keyword>
<keyword id="KW-0963">Cytoplasm</keyword>
<keyword id="KW-1185">Reference proteome</keyword>
<keyword id="KW-0687">Ribonucleoprotein</keyword>
<keyword id="KW-0689">Ribosomal protein</keyword>
<keyword id="KW-0698">rRNA processing</keyword>
<dbReference type="EMBL" id="X87371">
    <property type="protein sequence ID" value="CAA60819.1"/>
    <property type="molecule type" value="Genomic_DNA"/>
</dbReference>
<dbReference type="EMBL" id="Z49411">
    <property type="protein sequence ID" value="CAA89431.1"/>
    <property type="molecule type" value="Genomic_DNA"/>
</dbReference>
<dbReference type="EMBL" id="BK006943">
    <property type="protein sequence ID" value="DAA08665.1"/>
    <property type="molecule type" value="Genomic_DNA"/>
</dbReference>
<dbReference type="PIR" id="S56918">
    <property type="entry name" value="S56918"/>
</dbReference>
<dbReference type="RefSeq" id="NP_012399.1">
    <property type="nucleotide sequence ID" value="NM_001181569.1"/>
</dbReference>
<dbReference type="SMR" id="Q3E754"/>
<dbReference type="BioGRID" id="33621">
    <property type="interactions" value="456"/>
</dbReference>
<dbReference type="ComplexPortal" id="CPX-1599">
    <property type="entry name" value="40S cytosolic small ribosomal subunit"/>
</dbReference>
<dbReference type="FunCoup" id="Q3E754">
    <property type="interactions" value="1009"/>
</dbReference>
<dbReference type="IntAct" id="Q3E754">
    <property type="interactions" value="73"/>
</dbReference>
<dbReference type="MINT" id="Q3E754"/>
<dbReference type="STRING" id="4932.YJL136C"/>
<dbReference type="iPTMnet" id="Q3E754"/>
<dbReference type="PaxDb" id="4932-YJL136C"/>
<dbReference type="PeptideAtlas" id="Q3E754"/>
<dbReference type="TopDownProteomics" id="Q3E754"/>
<dbReference type="EnsemblFungi" id="YJL136C_mRNA">
    <property type="protein sequence ID" value="YJL136C"/>
    <property type="gene ID" value="YJL136C"/>
</dbReference>
<dbReference type="GeneID" id="853305"/>
<dbReference type="KEGG" id="sce:YJL136C"/>
<dbReference type="AGR" id="SGD:S000003672"/>
<dbReference type="SGD" id="S000003672">
    <property type="gene designation" value="RPS21B"/>
</dbReference>
<dbReference type="VEuPathDB" id="FungiDB:YJL136C"/>
<dbReference type="eggNOG" id="KOG3486">
    <property type="taxonomic scope" value="Eukaryota"/>
</dbReference>
<dbReference type="GeneTree" id="ENSGT00390000017515"/>
<dbReference type="HOGENOM" id="CLU_167122_2_0_1"/>
<dbReference type="InParanoid" id="Q3E754"/>
<dbReference type="OMA" id="GESDACM"/>
<dbReference type="OrthoDB" id="278325at2759"/>
<dbReference type="BioCyc" id="YEAST:G3O-31583-MONOMER"/>
<dbReference type="Reactome" id="R-SCE-156827">
    <property type="pathway name" value="L13a-mediated translational silencing of Ceruloplasmin expression"/>
</dbReference>
<dbReference type="Reactome" id="R-SCE-1799339">
    <property type="pathway name" value="SRP-dependent cotranslational protein targeting to membrane"/>
</dbReference>
<dbReference type="Reactome" id="R-SCE-72649">
    <property type="pathway name" value="Translation initiation complex formation"/>
</dbReference>
<dbReference type="Reactome" id="R-SCE-72689">
    <property type="pathway name" value="Formation of a pool of free 40S subunits"/>
</dbReference>
<dbReference type="Reactome" id="R-SCE-72695">
    <property type="pathway name" value="Formation of the ternary complex, and subsequently, the 43S complex"/>
</dbReference>
<dbReference type="Reactome" id="R-SCE-72702">
    <property type="pathway name" value="Ribosomal scanning and start codon recognition"/>
</dbReference>
<dbReference type="Reactome" id="R-SCE-72706">
    <property type="pathway name" value="GTP hydrolysis and joining of the 60S ribosomal subunit"/>
</dbReference>
<dbReference type="Reactome" id="R-SCE-975956">
    <property type="pathway name" value="Nonsense Mediated Decay (NMD) independent of the Exon Junction Complex (EJC)"/>
</dbReference>
<dbReference type="Reactome" id="R-SCE-975957">
    <property type="pathway name" value="Nonsense Mediated Decay (NMD) enhanced by the Exon Junction Complex (EJC)"/>
</dbReference>
<dbReference type="BioGRID-ORCS" id="853305">
    <property type="hits" value="9 hits in 10 CRISPR screens"/>
</dbReference>
<dbReference type="PRO" id="PR:Q3E754"/>
<dbReference type="Proteomes" id="UP000002311">
    <property type="component" value="Chromosome X"/>
</dbReference>
<dbReference type="RNAct" id="Q3E754">
    <property type="molecule type" value="protein"/>
</dbReference>
<dbReference type="GO" id="GO:0005829">
    <property type="term" value="C:cytosol"/>
    <property type="evidence" value="ECO:0000304"/>
    <property type="project" value="Reactome"/>
</dbReference>
<dbReference type="GO" id="GO:0022627">
    <property type="term" value="C:cytosolic small ribosomal subunit"/>
    <property type="evidence" value="ECO:0000314"/>
    <property type="project" value="SGD"/>
</dbReference>
<dbReference type="GO" id="GO:0003735">
    <property type="term" value="F:structural constituent of ribosome"/>
    <property type="evidence" value="ECO:0000314"/>
    <property type="project" value="SGD"/>
</dbReference>
<dbReference type="GO" id="GO:0000447">
    <property type="term" value="P:endonucleolytic cleavage in ITS1 to separate SSU-rRNA from 5.8S rRNA and LSU-rRNA from tricistronic rRNA transcript (SSU-rRNA, 5.8S rRNA, LSU-rRNA)"/>
    <property type="evidence" value="ECO:0000315"/>
    <property type="project" value="SGD"/>
</dbReference>
<dbReference type="GO" id="GO:0000461">
    <property type="term" value="P:endonucleolytic cleavage to generate mature 3'-end of SSU-rRNA from (SSU-rRNA, 5.8S rRNA, LSU-rRNA)"/>
    <property type="evidence" value="ECO:0000315"/>
    <property type="project" value="SGD"/>
</dbReference>
<dbReference type="GO" id="GO:0006412">
    <property type="term" value="P:translation"/>
    <property type="evidence" value="ECO:0007669"/>
    <property type="project" value="InterPro"/>
</dbReference>
<dbReference type="FunFam" id="3.30.1230.20:FF:000001">
    <property type="entry name" value="40S ribosomal protein S21"/>
    <property type="match status" value="1"/>
</dbReference>
<dbReference type="Gene3D" id="3.30.1230.20">
    <property type="match status" value="1"/>
</dbReference>
<dbReference type="InterPro" id="IPR001931">
    <property type="entry name" value="Ribosomal_eS21"/>
</dbReference>
<dbReference type="InterPro" id="IPR018279">
    <property type="entry name" value="Ribosomal_eS21_CS"/>
</dbReference>
<dbReference type="InterPro" id="IPR038579">
    <property type="entry name" value="Ribosomal_eS21_sf"/>
</dbReference>
<dbReference type="PANTHER" id="PTHR10442">
    <property type="entry name" value="40S RIBOSOMAL PROTEIN S21"/>
    <property type="match status" value="1"/>
</dbReference>
<dbReference type="Pfam" id="PF01249">
    <property type="entry name" value="Ribosomal_S21e"/>
    <property type="match status" value="1"/>
</dbReference>
<dbReference type="PIRSF" id="PIRSF002148">
    <property type="entry name" value="Ribosomal_S21e"/>
    <property type="match status" value="1"/>
</dbReference>
<dbReference type="PROSITE" id="PS00996">
    <property type="entry name" value="RIBOSOMAL_S21E"/>
    <property type="match status" value="1"/>
</dbReference>
<reference key="1">
    <citation type="journal article" date="1996" name="Yeast">
        <title>Sequence analysis of a 40.7 kb segment from the left arm of yeast chromosome X reveals 14 known genes and 13 new open reading frames including homologues of genes clustered on the right arm of chromosome XI.</title>
        <authorList>
            <person name="Katsoulou C."/>
            <person name="Tzermia M."/>
            <person name="Tavernarakis N."/>
            <person name="Alexandraki D."/>
        </authorList>
    </citation>
    <scope>NUCLEOTIDE SEQUENCE [GENOMIC DNA]</scope>
    <source>
        <strain>ATCC 96604 / S288c / FY1679</strain>
    </source>
</reference>
<reference key="2">
    <citation type="journal article" date="1996" name="EMBO J.">
        <title>Complete nucleotide sequence of Saccharomyces cerevisiae chromosome X.</title>
        <authorList>
            <person name="Galibert F."/>
            <person name="Alexandraki D."/>
            <person name="Baur A."/>
            <person name="Boles E."/>
            <person name="Chalwatzis N."/>
            <person name="Chuat J.-C."/>
            <person name="Coster F."/>
            <person name="Cziepluch C."/>
            <person name="de Haan M."/>
            <person name="Domdey H."/>
            <person name="Durand P."/>
            <person name="Entian K.-D."/>
            <person name="Gatius M."/>
            <person name="Goffeau A."/>
            <person name="Grivell L.A."/>
            <person name="Hennemann A."/>
            <person name="Herbert C.J."/>
            <person name="Heumann K."/>
            <person name="Hilger F."/>
            <person name="Hollenberg C.P."/>
            <person name="Huang M.-E."/>
            <person name="Jacq C."/>
            <person name="Jauniaux J.-C."/>
            <person name="Katsoulou C."/>
            <person name="Kirchrath L."/>
            <person name="Kleine K."/>
            <person name="Kordes E."/>
            <person name="Koetter P."/>
            <person name="Liebl S."/>
            <person name="Louis E.J."/>
            <person name="Manus V."/>
            <person name="Mewes H.-W."/>
            <person name="Miosga T."/>
            <person name="Obermaier B."/>
            <person name="Perea J."/>
            <person name="Pohl T.M."/>
            <person name="Portetelle D."/>
            <person name="Pujol A."/>
            <person name="Purnelle B."/>
            <person name="Ramezani Rad M."/>
            <person name="Rasmussen S.W."/>
            <person name="Rose M."/>
            <person name="Rossau R."/>
            <person name="Schaaff-Gerstenschlaeger I."/>
            <person name="Smits P.H.M."/>
            <person name="Scarcez T."/>
            <person name="Soriano N."/>
            <person name="To Van D."/>
            <person name="Tzermia M."/>
            <person name="Van Broekhoven A."/>
            <person name="Vandenbol M."/>
            <person name="Wedler H."/>
            <person name="von Wettstein D."/>
            <person name="Wambutt R."/>
            <person name="Zagulski M."/>
            <person name="Zollner A."/>
            <person name="Karpfinger-Hartl L."/>
        </authorList>
    </citation>
    <scope>NUCLEOTIDE SEQUENCE [LARGE SCALE GENOMIC DNA]</scope>
    <source>
        <strain>ATCC 204508 / S288c</strain>
    </source>
</reference>
<reference key="3">
    <citation type="journal article" date="2014" name="G3 (Bethesda)">
        <title>The reference genome sequence of Saccharomyces cerevisiae: Then and now.</title>
        <authorList>
            <person name="Engel S.R."/>
            <person name="Dietrich F.S."/>
            <person name="Fisk D.G."/>
            <person name="Binkley G."/>
            <person name="Balakrishnan R."/>
            <person name="Costanzo M.C."/>
            <person name="Dwight S.S."/>
            <person name="Hitz B.C."/>
            <person name="Karra K."/>
            <person name="Nash R.S."/>
            <person name="Weng S."/>
            <person name="Wong E.D."/>
            <person name="Lloyd P."/>
            <person name="Skrzypek M.S."/>
            <person name="Miyasato S.R."/>
            <person name="Simison M."/>
            <person name="Cherry J.M."/>
        </authorList>
    </citation>
    <scope>GENOME REANNOTATION</scope>
    <source>
        <strain>ATCC 204508 / S288c</strain>
    </source>
</reference>
<reference key="4">
    <citation type="journal article" date="1998" name="Yeast">
        <title>The list of cytoplasmic ribosomal proteins of Saccharomyces cerevisiae.</title>
        <authorList>
            <person name="Planta R.J."/>
            <person name="Mager W.H."/>
        </authorList>
    </citation>
    <scope>NOMENCLATURE</scope>
    <scope>SUBUNIT</scope>
</reference>
<reference key="5">
    <citation type="journal article" date="1999" name="J. Biol. Chem.">
        <title>The action of N-terminal acetyltransferases on yeast ribosomal proteins.</title>
        <authorList>
            <person name="Arnold R.J."/>
            <person name="Polevoda B."/>
            <person name="Reilly J.P."/>
            <person name="Sherman F."/>
        </authorList>
    </citation>
    <scope>ACETYLATION AT MET-1 BY NATB</scope>
</reference>
<reference key="6">
    <citation type="journal article" date="2003" name="Nature">
        <title>Global analysis of protein localization in budding yeast.</title>
        <authorList>
            <person name="Huh W.-K."/>
            <person name="Falvo J.V."/>
            <person name="Gerke L.C."/>
            <person name="Carroll A.S."/>
            <person name="Howson R.W."/>
            <person name="Weissman J.S."/>
            <person name="O'Shea E.K."/>
        </authorList>
    </citation>
    <scope>SUBCELLULAR LOCATION [LARGE SCALE ANALYSIS]</scope>
</reference>
<reference key="7">
    <citation type="journal article" date="2003" name="Nature">
        <title>Global analysis of protein expression in yeast.</title>
        <authorList>
            <person name="Ghaemmaghami S."/>
            <person name="Huh W.-K."/>
            <person name="Bower K."/>
            <person name="Howson R.W."/>
            <person name="Belle A."/>
            <person name="Dephoure N."/>
            <person name="O'Shea E.K."/>
            <person name="Weissman J.S."/>
        </authorList>
    </citation>
    <scope>LEVEL OF PROTEIN EXPRESSION [LARGE SCALE ANALYSIS]</scope>
</reference>
<reference key="8">
    <citation type="journal article" date="2003" name="Nucleic Acids Res.">
        <title>Ribosomal proteins Rps0 and Rps21 of Saccharomyces cerevisiae have overlapping functions in the maturation of the 3' end of 18S rRNA.</title>
        <authorList>
            <person name="Tabb-Massey A."/>
            <person name="Caffrey J.M."/>
            <person name="Logsden P."/>
            <person name="Taylor S."/>
            <person name="Trent J.O."/>
            <person name="Ellis S.R."/>
        </authorList>
    </citation>
    <scope>FUNCTION</scope>
    <scope>SUBCELLULAR LOCATION</scope>
    <scope>DISRUPTION PHENOTYPE</scope>
</reference>
<reference key="9">
    <citation type="journal article" date="2011" name="Science">
        <title>The structure of the eukaryotic ribosome at 3.0 A resolution.</title>
        <authorList>
            <person name="Ben-Shem A."/>
            <person name="Garreau de Loubresse N."/>
            <person name="Melnikov S."/>
            <person name="Jenner L."/>
            <person name="Yusupova G."/>
            <person name="Yusupov M."/>
        </authorList>
    </citation>
    <scope>SUBUNIT</scope>
    <scope>SUBCELLULAR LOCATION</scope>
</reference>
<reference key="10">
    <citation type="journal article" date="2014" name="Curr. Opin. Struct. Biol.">
        <title>A new system for naming ribosomal proteins.</title>
        <authorList>
            <person name="Ban N."/>
            <person name="Beckmann R."/>
            <person name="Cate J.H.D."/>
            <person name="Dinman J.D."/>
            <person name="Dragon F."/>
            <person name="Ellis S.R."/>
            <person name="Lafontaine D.L.J."/>
            <person name="Lindahl L."/>
            <person name="Liljas A."/>
            <person name="Lipton J.M."/>
            <person name="McAlear M.A."/>
            <person name="Moore P.B."/>
            <person name="Noller H.F."/>
            <person name="Ortega J."/>
            <person name="Panse V.G."/>
            <person name="Ramakrishnan V."/>
            <person name="Spahn C.M.T."/>
            <person name="Steitz T.A."/>
            <person name="Tchorzewski M."/>
            <person name="Tollervey D."/>
            <person name="Warren A.J."/>
            <person name="Williamson J.R."/>
            <person name="Wilson D."/>
            <person name="Yonath A."/>
            <person name="Yusupov M."/>
        </authorList>
    </citation>
    <scope>NOMENCLATURE</scope>
</reference>
<accession>Q3E754</accession>
<accession>D6VW49</accession>
<accession>P05760</accession>
<sequence>MENDKGQLVELYVPRKCSATNRIIKADDHASVQINVAKVDEEGRAIPGEYITYALSGYVRSRGESDDSLNRLAQNDGLLKNVWSYSR</sequence>
<evidence type="ECO:0000269" key="1">
    <source>
    </source>
</evidence>
<evidence type="ECO:0000269" key="2">
    <source>
    </source>
</evidence>
<evidence type="ECO:0000269" key="3">
    <source>
    </source>
</evidence>
<evidence type="ECO:0000269" key="4">
    <source>
    </source>
</evidence>
<evidence type="ECO:0000269" key="5">
    <source>
    </source>
</evidence>
<evidence type="ECO:0000303" key="6">
    <source>
    </source>
</evidence>
<evidence type="ECO:0000303" key="7">
    <source>
    </source>
</evidence>
<evidence type="ECO:0000305" key="8"/>
<evidence type="ECO:0000305" key="9">
    <source>
    </source>
</evidence>
<evidence type="ECO:0000305" key="10">
    <source>
    </source>
</evidence>
<gene>
    <name evidence="7" type="primary">RPS21B</name>
    <name type="synonym">RPS25B</name>
    <name type="synonym">RPS26B</name>
    <name type="ordered locus">YJL136C</name>
    <name type="ORF">J0664</name>
</gene>
<organism>
    <name type="scientific">Saccharomyces cerevisiae (strain ATCC 204508 / S288c)</name>
    <name type="common">Baker's yeast</name>
    <dbReference type="NCBI Taxonomy" id="559292"/>
    <lineage>
        <taxon>Eukaryota</taxon>
        <taxon>Fungi</taxon>
        <taxon>Dikarya</taxon>
        <taxon>Ascomycota</taxon>
        <taxon>Saccharomycotina</taxon>
        <taxon>Saccharomycetes</taxon>
        <taxon>Saccharomycetales</taxon>
        <taxon>Saccharomycetaceae</taxon>
        <taxon>Saccharomyces</taxon>
    </lineage>
</organism>